<proteinExistence type="inferred from homology"/>
<dbReference type="EMBL" id="AL845434">
    <property type="status" value="NOT_ANNOTATED_CDS"/>
    <property type="molecule type" value="Genomic_DNA"/>
</dbReference>
<dbReference type="CCDS" id="CCDS38049.1"/>
<dbReference type="RefSeq" id="NP_001074779.1">
    <property type="nucleotide sequence ID" value="NM_001081310.2"/>
</dbReference>
<dbReference type="FunCoup" id="A2ARJ3">
    <property type="interactions" value="2"/>
</dbReference>
<dbReference type="STRING" id="10090.ENSMUSP00000076722"/>
<dbReference type="GlyCosmos" id="A2ARJ3">
    <property type="glycosylation" value="1 site, No reported glycans"/>
</dbReference>
<dbReference type="GlyGen" id="A2ARJ3">
    <property type="glycosylation" value="1 site"/>
</dbReference>
<dbReference type="PhosphoSitePlus" id="A2ARJ3"/>
<dbReference type="PaxDb" id="10090-ENSMUSP00000076722"/>
<dbReference type="PeptideAtlas" id="A2ARJ3"/>
<dbReference type="ProteomicsDB" id="258927"/>
<dbReference type="Antibodypedia" id="68395">
    <property type="antibodies" value="25 antibodies from 7 providers"/>
</dbReference>
<dbReference type="Ensembl" id="ENSMUST00000077517.9">
    <property type="protein sequence ID" value="ENSMUSP00000076722.8"/>
    <property type="gene ID" value="ENSMUSG00000061531.9"/>
</dbReference>
<dbReference type="GeneID" id="625286"/>
<dbReference type="KEGG" id="mmu:625286"/>
<dbReference type="UCSC" id="uc008ikj.1">
    <property type="organism name" value="mouse"/>
</dbReference>
<dbReference type="AGR" id="MGI:1919309"/>
<dbReference type="CTD" id="653567"/>
<dbReference type="MGI" id="MGI:1919309">
    <property type="gene designation" value="Tmem236"/>
</dbReference>
<dbReference type="VEuPathDB" id="HostDB:ENSMUSG00000061531"/>
<dbReference type="eggNOG" id="ENOG502QVFM">
    <property type="taxonomic scope" value="Eukaryota"/>
</dbReference>
<dbReference type="GeneTree" id="ENSGT00390000015525"/>
<dbReference type="HOGENOM" id="CLU_072609_0_0_1"/>
<dbReference type="InParanoid" id="A2ARJ3"/>
<dbReference type="OMA" id="MMMCVVL"/>
<dbReference type="OrthoDB" id="6286514at2759"/>
<dbReference type="PhylomeDB" id="A2ARJ3"/>
<dbReference type="TreeFam" id="TF328759"/>
<dbReference type="BioGRID-ORCS" id="625286">
    <property type="hits" value="0 hits in 74 CRISPR screens"/>
</dbReference>
<dbReference type="ChiTaRS" id="Tmem236">
    <property type="organism name" value="mouse"/>
</dbReference>
<dbReference type="PRO" id="PR:A2ARJ3"/>
<dbReference type="Proteomes" id="UP000000589">
    <property type="component" value="Chromosome 2"/>
</dbReference>
<dbReference type="RNAct" id="A2ARJ3">
    <property type="molecule type" value="protein"/>
</dbReference>
<dbReference type="Bgee" id="ENSMUSG00000061531">
    <property type="expression patterns" value="Expressed in small intestine Peyer's patch and 25 other cell types or tissues"/>
</dbReference>
<dbReference type="GO" id="GO:0016020">
    <property type="term" value="C:membrane"/>
    <property type="evidence" value="ECO:0007669"/>
    <property type="project" value="UniProtKB-SubCell"/>
</dbReference>
<dbReference type="InterPro" id="IPR020394">
    <property type="entry name" value="Uncharacterised_FAM23-like_TM"/>
</dbReference>
<dbReference type="PANTHER" id="PTHR31453">
    <property type="entry name" value="TRANSMEMBRANE PROTEIN 236"/>
    <property type="match status" value="1"/>
</dbReference>
<dbReference type="PANTHER" id="PTHR31453:SF2">
    <property type="entry name" value="TRANSMEMBRANE PROTEIN 236"/>
    <property type="match status" value="1"/>
</dbReference>
<comment type="subcellular location">
    <subcellularLocation>
        <location evidence="2">Membrane</location>
        <topology evidence="2">Multi-pass membrane protein</topology>
    </subcellularLocation>
</comment>
<comment type="similarity">
    <text evidence="2">Belongs to the TMEM236 family.</text>
</comment>
<reference key="1">
    <citation type="journal article" date="2009" name="PLoS Biol.">
        <title>Lineage-specific biology revealed by a finished genome assembly of the mouse.</title>
        <authorList>
            <person name="Church D.M."/>
            <person name="Goodstadt L."/>
            <person name="Hillier L.W."/>
            <person name="Zody M.C."/>
            <person name="Goldstein S."/>
            <person name="She X."/>
            <person name="Bult C.J."/>
            <person name="Agarwala R."/>
            <person name="Cherry J.L."/>
            <person name="DiCuccio M."/>
            <person name="Hlavina W."/>
            <person name="Kapustin Y."/>
            <person name="Meric P."/>
            <person name="Maglott D."/>
            <person name="Birtle Z."/>
            <person name="Marques A.C."/>
            <person name="Graves T."/>
            <person name="Zhou S."/>
            <person name="Teague B."/>
            <person name="Potamousis K."/>
            <person name="Churas C."/>
            <person name="Place M."/>
            <person name="Herschleb J."/>
            <person name="Runnheim R."/>
            <person name="Forrest D."/>
            <person name="Amos-Landgraf J."/>
            <person name="Schwartz D.C."/>
            <person name="Cheng Z."/>
            <person name="Lindblad-Toh K."/>
            <person name="Eichler E.E."/>
            <person name="Ponting C.P."/>
        </authorList>
    </citation>
    <scope>NUCLEOTIDE SEQUENCE [LARGE SCALE GENOMIC DNA]</scope>
    <source>
        <strain>C57BL/6J</strain>
    </source>
</reference>
<name>TM236_MOUSE</name>
<gene>
    <name type="primary">Tmem236</name>
    <name type="synonym">Fam23a</name>
</gene>
<protein>
    <recommendedName>
        <fullName>Transmembrane protein 236</fullName>
    </recommendedName>
</protein>
<evidence type="ECO:0000255" key="1"/>
<evidence type="ECO:0000305" key="2"/>
<feature type="chain" id="PRO_0000409538" description="Transmembrane protein 236">
    <location>
        <begin position="1"/>
        <end position="344"/>
    </location>
</feature>
<feature type="transmembrane region" description="Helical" evidence="1">
    <location>
        <begin position="9"/>
        <end position="29"/>
    </location>
</feature>
<feature type="transmembrane region" description="Helical" evidence="1">
    <location>
        <begin position="47"/>
        <end position="67"/>
    </location>
</feature>
<feature type="transmembrane region" description="Helical" evidence="1">
    <location>
        <begin position="86"/>
        <end position="106"/>
    </location>
</feature>
<feature type="transmembrane region" description="Helical" evidence="1">
    <location>
        <begin position="122"/>
        <end position="142"/>
    </location>
</feature>
<feature type="transmembrane region" description="Helical" evidence="1">
    <location>
        <begin position="257"/>
        <end position="277"/>
    </location>
</feature>
<feature type="transmembrane region" description="Helical" evidence="1">
    <location>
        <begin position="294"/>
        <end position="314"/>
    </location>
</feature>
<feature type="glycosylation site" description="N-linked (GlcNAc...) asparagine" evidence="1">
    <location>
        <position position="114"/>
    </location>
</feature>
<sequence>MASGKIIKLVVFELLEFAAFSIPTLVIMEQFATANQRTKSERTHYWLIVSCSIAYVAVVSLLIWVPVKVVLYKKRHLYKKIIGWRPVLVMCVVLTTLPSFSFSIAVTEVQKNINGSANSLPESLPDLPVSLVLLSLIVVDIIEKLRQYPLRGSQKGYEDNDICITSLQQIKTVTEQVVQSDGNPASAQAAKPTAMSQPRNHVAVLAGPLEPSFQSRILRTMSQRDVRAELFLRSFLMWADTVEMLRVAGHQAVYKSAWLYPVYIFSFISLLRMVFTPKNPLLNSLGILMQDLPFVFLRLSLILALGTITPVLGLCKNVLVTISYIYFNYVTKLRPFSAFETSPF</sequence>
<keyword id="KW-0325">Glycoprotein</keyword>
<keyword id="KW-0472">Membrane</keyword>
<keyword id="KW-1185">Reference proteome</keyword>
<keyword id="KW-0812">Transmembrane</keyword>
<keyword id="KW-1133">Transmembrane helix</keyword>
<organism>
    <name type="scientific">Mus musculus</name>
    <name type="common">Mouse</name>
    <dbReference type="NCBI Taxonomy" id="10090"/>
    <lineage>
        <taxon>Eukaryota</taxon>
        <taxon>Metazoa</taxon>
        <taxon>Chordata</taxon>
        <taxon>Craniata</taxon>
        <taxon>Vertebrata</taxon>
        <taxon>Euteleostomi</taxon>
        <taxon>Mammalia</taxon>
        <taxon>Eutheria</taxon>
        <taxon>Euarchontoglires</taxon>
        <taxon>Glires</taxon>
        <taxon>Rodentia</taxon>
        <taxon>Myomorpha</taxon>
        <taxon>Muroidea</taxon>
        <taxon>Muridae</taxon>
        <taxon>Murinae</taxon>
        <taxon>Mus</taxon>
        <taxon>Mus</taxon>
    </lineage>
</organism>
<accession>A2ARJ3</accession>